<accession>G3XDA3</accession>
<accession>Q7DCC4</accession>
<accession>Q9KWF2</accession>
<keyword id="KW-0997">Cell inner membrane</keyword>
<keyword id="KW-1003">Cell membrane</keyword>
<keyword id="KW-0145">Chemotaxis</keyword>
<keyword id="KW-0472">Membrane</keyword>
<keyword id="KW-0488">Methylation</keyword>
<keyword id="KW-1185">Reference proteome</keyword>
<keyword id="KW-0807">Transducer</keyword>
<keyword id="KW-0812">Transmembrane</keyword>
<keyword id="KW-1133">Transmembrane helix</keyword>
<comment type="function">
    <text evidence="4 5">Chemotactic-signal transducers respond to changes in the concentration of attractants and repellents in the environment, transduce a signal from the outside to the inside of the cell, and facilitate sensory adaptation through the variation of the level of methylation. Chemoreceptor for inorganic phosphate, which is required for taxis at high concentrations of phosphate (PubMed:10852870). Recognizes inorganic phosphate directly. Can also bind to other components that have a pyrophosphate group, including ATP and ADP (PubMed:27353565).</text>
</comment>
<comment type="subcellular location">
    <subcellularLocation>
        <location evidence="8">Cell inner membrane</location>
        <topology evidence="1">Multi-pass membrane protein</topology>
    </subcellularLocation>
</comment>
<comment type="induction">
    <text evidence="4">Constitutively expressed.</text>
</comment>
<comment type="domain">
    <text evidence="5">Binding to inorganic phosphate induces dimerization and stabilization of the ligand binding domain.</text>
</comment>
<comment type="similarity">
    <text evidence="7">Belongs to the methyl-accepting chemotaxis (MCP) protein family.</text>
</comment>
<dbReference type="EMBL" id="AB039332">
    <property type="protein sequence ID" value="BAA96488.1"/>
    <property type="molecule type" value="Genomic_DNA"/>
</dbReference>
<dbReference type="EMBL" id="AE004091">
    <property type="protein sequence ID" value="AAG05949.1"/>
    <property type="molecule type" value="Genomic_DNA"/>
</dbReference>
<dbReference type="PIR" id="E83325">
    <property type="entry name" value="E83325"/>
</dbReference>
<dbReference type="RefSeq" id="NP_251251.1">
    <property type="nucleotide sequence ID" value="NC_002516.2"/>
</dbReference>
<dbReference type="RefSeq" id="WP_010895626.1">
    <property type="nucleotide sequence ID" value="NZ_QZGE01000008.1"/>
</dbReference>
<dbReference type="SMR" id="G3XDA3"/>
<dbReference type="FunCoup" id="G3XDA3">
    <property type="interactions" value="197"/>
</dbReference>
<dbReference type="STRING" id="208964.PA2561"/>
<dbReference type="PaxDb" id="208964-PA2561"/>
<dbReference type="GeneID" id="882739"/>
<dbReference type="KEGG" id="pae:PA2561"/>
<dbReference type="PATRIC" id="fig|208964.12.peg.2681"/>
<dbReference type="PseudoCAP" id="PA2561"/>
<dbReference type="HOGENOM" id="CLU_000445_107_27_6"/>
<dbReference type="InParanoid" id="G3XDA3"/>
<dbReference type="OrthoDB" id="1884279at2"/>
<dbReference type="PhylomeDB" id="G3XDA3"/>
<dbReference type="BioCyc" id="PAER208964:G1FZ6-2597-MONOMER"/>
<dbReference type="Proteomes" id="UP000002438">
    <property type="component" value="Chromosome"/>
</dbReference>
<dbReference type="GO" id="GO:0005886">
    <property type="term" value="C:plasma membrane"/>
    <property type="evidence" value="ECO:0007669"/>
    <property type="project" value="UniProtKB-SubCell"/>
</dbReference>
<dbReference type="GO" id="GO:0004888">
    <property type="term" value="F:transmembrane signaling receptor activity"/>
    <property type="evidence" value="ECO:0007669"/>
    <property type="project" value="InterPro"/>
</dbReference>
<dbReference type="GO" id="GO:0006935">
    <property type="term" value="P:chemotaxis"/>
    <property type="evidence" value="ECO:0000315"/>
    <property type="project" value="PseudoCAP"/>
</dbReference>
<dbReference type="GO" id="GO:0010247">
    <property type="term" value="P:detection of phosphate ion"/>
    <property type="evidence" value="ECO:0000315"/>
    <property type="project" value="PseudoCAP"/>
</dbReference>
<dbReference type="GO" id="GO:0007165">
    <property type="term" value="P:signal transduction"/>
    <property type="evidence" value="ECO:0007669"/>
    <property type="project" value="UniProtKB-KW"/>
</dbReference>
<dbReference type="CDD" id="cd06225">
    <property type="entry name" value="HAMP"/>
    <property type="match status" value="1"/>
</dbReference>
<dbReference type="CDD" id="cd11386">
    <property type="entry name" value="MCP_signal"/>
    <property type="match status" value="1"/>
</dbReference>
<dbReference type="FunFam" id="1.10.287.950:FF:000001">
    <property type="entry name" value="Methyl-accepting chemotaxis sensory transducer"/>
    <property type="match status" value="1"/>
</dbReference>
<dbReference type="Gene3D" id="1.10.8.500">
    <property type="entry name" value="HAMP domain in histidine kinase"/>
    <property type="match status" value="1"/>
</dbReference>
<dbReference type="Gene3D" id="1.10.287.950">
    <property type="entry name" value="Methyl-accepting chemotaxis protein"/>
    <property type="match status" value="1"/>
</dbReference>
<dbReference type="InterPro" id="IPR004090">
    <property type="entry name" value="Chemotax_Me-accpt_rcpt"/>
</dbReference>
<dbReference type="InterPro" id="IPR003660">
    <property type="entry name" value="HAMP_dom"/>
</dbReference>
<dbReference type="InterPro" id="IPR004089">
    <property type="entry name" value="MCPsignal_dom"/>
</dbReference>
<dbReference type="PANTHER" id="PTHR32089">
    <property type="entry name" value="METHYL-ACCEPTING CHEMOTAXIS PROTEIN MCPB"/>
    <property type="match status" value="1"/>
</dbReference>
<dbReference type="PANTHER" id="PTHR32089:SF120">
    <property type="entry name" value="METHYL-ACCEPTING CHEMOTAXIS PROTEIN TLPQ"/>
    <property type="match status" value="1"/>
</dbReference>
<dbReference type="Pfam" id="PF00672">
    <property type="entry name" value="HAMP"/>
    <property type="match status" value="1"/>
</dbReference>
<dbReference type="Pfam" id="PF00015">
    <property type="entry name" value="MCPsignal"/>
    <property type="match status" value="1"/>
</dbReference>
<dbReference type="PRINTS" id="PR00260">
    <property type="entry name" value="CHEMTRNSDUCR"/>
</dbReference>
<dbReference type="SMART" id="SM00304">
    <property type="entry name" value="HAMP"/>
    <property type="match status" value="2"/>
</dbReference>
<dbReference type="SMART" id="SM00283">
    <property type="entry name" value="MA"/>
    <property type="match status" value="1"/>
</dbReference>
<dbReference type="SUPFAM" id="SSF58104">
    <property type="entry name" value="Methyl-accepting chemotaxis protein (MCP) signaling domain"/>
    <property type="match status" value="1"/>
</dbReference>
<dbReference type="PROSITE" id="PS50111">
    <property type="entry name" value="CHEMOTAXIS_TRANSDUC_2"/>
    <property type="match status" value="1"/>
</dbReference>
<dbReference type="PROSITE" id="PS50885">
    <property type="entry name" value="HAMP"/>
    <property type="match status" value="1"/>
</dbReference>
<reference key="1">
    <citation type="journal article" date="2000" name="J. Bacteriol.">
        <title>Identification and characterization of two chemotactic transducers for inorganic phosphate in Pseudomonas aeruginosa.</title>
        <authorList>
            <person name="Wu H."/>
            <person name="Kato J."/>
            <person name="Kuroda A."/>
            <person name="Ikeda T."/>
            <person name="Takiguchi N."/>
            <person name="Ohtake H."/>
        </authorList>
    </citation>
    <scope>NUCLEOTIDE SEQUENCE [GENOMIC DNA]</scope>
    <scope>FUNCTION AS A CHEMORECEPTOR</scope>
    <scope>INDUCTION</scope>
    <source>
        <strain>ATCC 15692 / DSM 22644 / CIP 104116 / JCM 14847 / LMG 12228 / 1C / PRS 101 / PAO1</strain>
    </source>
</reference>
<reference key="2">
    <citation type="journal article" date="2000" name="Nature">
        <title>Complete genome sequence of Pseudomonas aeruginosa PAO1, an opportunistic pathogen.</title>
        <authorList>
            <person name="Stover C.K."/>
            <person name="Pham X.-Q.T."/>
            <person name="Erwin A.L."/>
            <person name="Mizoguchi S.D."/>
            <person name="Warrener P."/>
            <person name="Hickey M.J."/>
            <person name="Brinkman F.S.L."/>
            <person name="Hufnagle W.O."/>
            <person name="Kowalik D.J."/>
            <person name="Lagrou M."/>
            <person name="Garber R.L."/>
            <person name="Goltry L."/>
            <person name="Tolentino E."/>
            <person name="Westbrock-Wadman S."/>
            <person name="Yuan Y."/>
            <person name="Brody L.L."/>
            <person name="Coulter S.N."/>
            <person name="Folger K.R."/>
            <person name="Kas A."/>
            <person name="Larbig K."/>
            <person name="Lim R.M."/>
            <person name="Smith K.A."/>
            <person name="Spencer D.H."/>
            <person name="Wong G.K.-S."/>
            <person name="Wu Z."/>
            <person name="Paulsen I.T."/>
            <person name="Reizer J."/>
            <person name="Saier M.H. Jr."/>
            <person name="Hancock R.E.W."/>
            <person name="Lory S."/>
            <person name="Olson M.V."/>
        </authorList>
    </citation>
    <scope>NUCLEOTIDE SEQUENCE [LARGE SCALE GENOMIC DNA]</scope>
    <source>
        <strain>ATCC 15692 / DSM 22644 / CIP 104116 / JCM 14847 / LMG 12228 / 1C / PRS 101 / PAO1</strain>
    </source>
</reference>
<reference key="3">
    <citation type="journal article" date="2016" name="Sci. Rep.">
        <title>Two different mechanisms mediate chemotaxis to inorganic phosphate in Pseudomonas aeruginosa.</title>
        <authorList>
            <person name="Rico-Jimenez M."/>
            <person name="Reyes-Darias J.A."/>
            <person name="Ortega A."/>
            <person name="Diez Pena A.I."/>
            <person name="Morel B."/>
            <person name="Krell T."/>
        </authorList>
    </citation>
    <scope>FUNCTION</scope>
    <scope>SUBCELLULAR LOCATION</scope>
    <scope>DOMAIN</scope>
</reference>
<proteinExistence type="evidence at protein level"/>
<feature type="chain" id="PRO_0000424878" description="Methyl-accepting chemotaxis protein CtpH">
    <location>
        <begin position="1"/>
        <end position="568"/>
    </location>
</feature>
<feature type="topological domain" description="Cytoplasmic" evidence="8">
    <location>
        <begin position="1"/>
        <end position="39"/>
    </location>
</feature>
<feature type="transmembrane region" description="Helical" evidence="1">
    <location>
        <begin position="40"/>
        <end position="60"/>
    </location>
</feature>
<feature type="topological domain" description="Periplasmic" evidence="8">
    <location>
        <begin position="61"/>
        <end position="216"/>
    </location>
</feature>
<feature type="transmembrane region" description="Helical" evidence="1">
    <location>
        <begin position="217"/>
        <end position="237"/>
    </location>
</feature>
<feature type="topological domain" description="Cytoplasmic" evidence="8">
    <location>
        <begin position="238"/>
        <end position="568"/>
    </location>
</feature>
<feature type="domain" description="HAMP" evidence="2">
    <location>
        <begin position="239"/>
        <end position="291"/>
    </location>
</feature>
<feature type="domain" description="Methyl-accepting transducer" evidence="3">
    <location>
        <begin position="296"/>
        <end position="532"/>
    </location>
</feature>
<protein>
    <recommendedName>
        <fullName evidence="7">Methyl-accepting chemotaxis protein CtpH</fullName>
    </recommendedName>
</protein>
<gene>
    <name evidence="6" type="primary">ctpH</name>
    <name type="ordered locus">PA2561</name>
</gene>
<sequence>MPASPGHRDVLGCLVAACVPVQPGNPSRRSMLQQSLRAQILVLLGGSLAALLLIALACFGSLTGDVRAYRELLGGPVRAAQLIDEANLQFRGQVQEWKNVLLRGRQTEAQTKYWSQFEAQERAVQDILGRLGSVAEGELKDRVERLREEHRRLGTAYRQGRQRFLEAGADPIAGDQAVTGIDRATTAQMQTLRDELHQASDLHSSSISAEARRTMLLGSLVLIGASLAVALLSLWLVNRNLVRPVQRLIEHIAQLSHGDFGERIEIRRKDELGKLALAANTLRDFLVDIFDRLRRSTRDLDSASGSLNAIASLMAAGTREQFSRTDQVATAMQEMSATAQEVARYAGDAARAADEADDSAQRGEDVMEETIRSIGEMRKEIDHTVEVIRQLESDSGRIGKVLDVIRGIAEQTNLLALNAAIEAARAGDAGRGFAVVADEVRTLAQRTAESIAEIHQIIDTVQNGAVNAARAIESGQSRSEAGAEQVANAGAMLRQITASVESIRDMNRQIATAAEEQTAVAEEISRNLTEIASIASSNQEQVEQTEAASRDLHGLSAQLGDALQRLRA</sequence>
<evidence type="ECO:0000255" key="1"/>
<evidence type="ECO:0000255" key="2">
    <source>
        <dbReference type="PROSITE-ProRule" id="PRU00102"/>
    </source>
</evidence>
<evidence type="ECO:0000255" key="3">
    <source>
        <dbReference type="PROSITE-ProRule" id="PRU00284"/>
    </source>
</evidence>
<evidence type="ECO:0000269" key="4">
    <source>
    </source>
</evidence>
<evidence type="ECO:0000269" key="5">
    <source>
    </source>
</evidence>
<evidence type="ECO:0000303" key="6">
    <source>
    </source>
</evidence>
<evidence type="ECO:0000305" key="7"/>
<evidence type="ECO:0000305" key="8">
    <source>
    </source>
</evidence>
<name>CTPH_PSEAE</name>
<organism>
    <name type="scientific">Pseudomonas aeruginosa (strain ATCC 15692 / DSM 22644 / CIP 104116 / JCM 14847 / LMG 12228 / 1C / PRS 101 / PAO1)</name>
    <dbReference type="NCBI Taxonomy" id="208964"/>
    <lineage>
        <taxon>Bacteria</taxon>
        <taxon>Pseudomonadati</taxon>
        <taxon>Pseudomonadota</taxon>
        <taxon>Gammaproteobacteria</taxon>
        <taxon>Pseudomonadales</taxon>
        <taxon>Pseudomonadaceae</taxon>
        <taxon>Pseudomonas</taxon>
    </lineage>
</organism>